<organism>
    <name type="scientific">Mycoplasma pneumoniae (strain ATCC 29342 / M129 / Subtype 1)</name>
    <name type="common">Mycoplasmoides pneumoniae</name>
    <dbReference type="NCBI Taxonomy" id="272634"/>
    <lineage>
        <taxon>Bacteria</taxon>
        <taxon>Bacillati</taxon>
        <taxon>Mycoplasmatota</taxon>
        <taxon>Mycoplasmoidales</taxon>
        <taxon>Mycoplasmoidaceae</taxon>
        <taxon>Mycoplasmoides</taxon>
    </lineage>
</organism>
<accession>P75089</accession>
<name>ALF_MYCPN</name>
<reference key="1">
    <citation type="journal article" date="1996" name="Nucleic Acids Res.">
        <title>Complete sequence analysis of the genome of the bacterium Mycoplasma pneumoniae.</title>
        <authorList>
            <person name="Himmelreich R."/>
            <person name="Hilbert H."/>
            <person name="Plagens H."/>
            <person name="Pirkl E."/>
            <person name="Li B.-C."/>
            <person name="Herrmann R."/>
        </authorList>
    </citation>
    <scope>NUCLEOTIDE SEQUENCE [LARGE SCALE GENOMIC DNA]</scope>
    <source>
        <strain>ATCC 29342 / M129 / Subtype 1</strain>
    </source>
</reference>
<sequence length="288" mass="31069">MLVNIKQMLQHAKQHHYAVPHININNYEWAKAVLTAAQQAKSPIIVSTSEGALKYISGHQVVVPMVKGLVDALKITVPVALHLDHGSYEGCKAALQAGFSSIMFDGSHLPFQENFTKSKELIELAKQTNASVELEVGTLGGEEDGIVGQGELANIEECKQIATLKPDALAAGIGNIHGLYPDNWKGLNYELIEAIAKATNLPLVLHGGSGIPEADVKKAIGLGISKLNINTECQLAFAKAIREYVEAKKDLDTHNKGYDPRKLLKSPTQAIVDCCLEKMQLCGSTNKA</sequence>
<feature type="chain" id="PRO_0000178720" description="Fructose-bisphosphate aldolase">
    <location>
        <begin position="1"/>
        <end position="288"/>
    </location>
</feature>
<feature type="active site" description="Proton donor" evidence="1">
    <location>
        <position position="84"/>
    </location>
</feature>
<feature type="binding site" evidence="1">
    <location>
        <position position="49"/>
    </location>
    <ligand>
        <name>D-glyceraldehyde 3-phosphate</name>
        <dbReference type="ChEBI" id="CHEBI:59776"/>
    </ligand>
</feature>
<feature type="binding site" evidence="1">
    <location>
        <position position="85"/>
    </location>
    <ligand>
        <name>Zn(2+)</name>
        <dbReference type="ChEBI" id="CHEBI:29105"/>
        <label>1</label>
        <note>catalytic</note>
    </ligand>
</feature>
<feature type="binding site" evidence="1">
    <location>
        <position position="105"/>
    </location>
    <ligand>
        <name>Zn(2+)</name>
        <dbReference type="ChEBI" id="CHEBI:29105"/>
        <label>2</label>
    </ligand>
</feature>
<feature type="binding site" evidence="1">
    <location>
        <position position="135"/>
    </location>
    <ligand>
        <name>Zn(2+)</name>
        <dbReference type="ChEBI" id="CHEBI:29105"/>
        <label>2</label>
    </ligand>
</feature>
<feature type="binding site" evidence="1">
    <location>
        <position position="177"/>
    </location>
    <ligand>
        <name>Zn(2+)</name>
        <dbReference type="ChEBI" id="CHEBI:29105"/>
        <label>1</label>
        <note>catalytic</note>
    </ligand>
</feature>
<feature type="binding site" evidence="1">
    <location>
        <position position="178"/>
    </location>
    <ligand>
        <name>dihydroxyacetone phosphate</name>
        <dbReference type="ChEBI" id="CHEBI:57642"/>
    </ligand>
</feature>
<feature type="binding site" evidence="1">
    <location>
        <position position="206"/>
    </location>
    <ligand>
        <name>Zn(2+)</name>
        <dbReference type="ChEBI" id="CHEBI:29105"/>
        <label>1</label>
        <note>catalytic</note>
    </ligand>
</feature>
<feature type="binding site" evidence="1">
    <location>
        <begin position="207"/>
        <end position="209"/>
    </location>
    <ligand>
        <name>dihydroxyacetone phosphate</name>
        <dbReference type="ChEBI" id="CHEBI:57642"/>
    </ligand>
</feature>
<feature type="binding site" evidence="1">
    <location>
        <begin position="228"/>
        <end position="231"/>
    </location>
    <ligand>
        <name>dihydroxyacetone phosphate</name>
        <dbReference type="ChEBI" id="CHEBI:57642"/>
    </ligand>
</feature>
<evidence type="ECO:0000250" key="1"/>
<evidence type="ECO:0000305" key="2"/>
<proteinExistence type="inferred from homology"/>
<dbReference type="EC" id="4.1.2.13"/>
<dbReference type="EMBL" id="U00089">
    <property type="protein sequence ID" value="AAB95777.1"/>
    <property type="molecule type" value="Genomic_DNA"/>
</dbReference>
<dbReference type="PIR" id="S73455">
    <property type="entry name" value="S73455"/>
</dbReference>
<dbReference type="RefSeq" id="NP_109713.1">
    <property type="nucleotide sequence ID" value="NC_000912.1"/>
</dbReference>
<dbReference type="RefSeq" id="WP_010874382.1">
    <property type="nucleotide sequence ID" value="NZ_OU342337.1"/>
</dbReference>
<dbReference type="SMR" id="P75089"/>
<dbReference type="IntAct" id="P75089">
    <property type="interactions" value="7"/>
</dbReference>
<dbReference type="STRING" id="272634.MPN_025"/>
<dbReference type="EnsemblBacteria" id="AAB95777">
    <property type="protein sequence ID" value="AAB95777"/>
    <property type="gene ID" value="MPN_025"/>
</dbReference>
<dbReference type="KEGG" id="mpn:MPN_025"/>
<dbReference type="PATRIC" id="fig|272634.6.peg.24"/>
<dbReference type="HOGENOM" id="CLU_040088_0_1_14"/>
<dbReference type="OrthoDB" id="9803995at2"/>
<dbReference type="BioCyc" id="MetaCyc:MONOMER-546"/>
<dbReference type="BioCyc" id="MPNE272634:G1GJ3-38-MONOMER"/>
<dbReference type="UniPathway" id="UPA00109">
    <property type="reaction ID" value="UER00183"/>
</dbReference>
<dbReference type="Proteomes" id="UP000000808">
    <property type="component" value="Chromosome"/>
</dbReference>
<dbReference type="GO" id="GO:0005829">
    <property type="term" value="C:cytosol"/>
    <property type="evidence" value="ECO:0000314"/>
    <property type="project" value="AgBase"/>
</dbReference>
<dbReference type="GO" id="GO:0004332">
    <property type="term" value="F:fructose-bisphosphate aldolase activity"/>
    <property type="evidence" value="ECO:0007669"/>
    <property type="project" value="UniProtKB-EC"/>
</dbReference>
<dbReference type="GO" id="GO:0008270">
    <property type="term" value="F:zinc ion binding"/>
    <property type="evidence" value="ECO:0007669"/>
    <property type="project" value="InterPro"/>
</dbReference>
<dbReference type="GO" id="GO:0030388">
    <property type="term" value="P:fructose 1,6-bisphosphate metabolic process"/>
    <property type="evidence" value="ECO:0007669"/>
    <property type="project" value="InterPro"/>
</dbReference>
<dbReference type="GO" id="GO:0006096">
    <property type="term" value="P:glycolytic process"/>
    <property type="evidence" value="ECO:0007669"/>
    <property type="project" value="UniProtKB-UniPathway"/>
</dbReference>
<dbReference type="CDD" id="cd00947">
    <property type="entry name" value="TBP_aldolase_IIB"/>
    <property type="match status" value="1"/>
</dbReference>
<dbReference type="FunFam" id="3.20.20.70:FF:000111">
    <property type="entry name" value="Fructose-1,6-bisphosphate aldolase"/>
    <property type="match status" value="1"/>
</dbReference>
<dbReference type="Gene3D" id="3.20.20.70">
    <property type="entry name" value="Aldolase class I"/>
    <property type="match status" value="1"/>
</dbReference>
<dbReference type="InterPro" id="IPR013785">
    <property type="entry name" value="Aldolase_TIM"/>
</dbReference>
<dbReference type="InterPro" id="IPR000771">
    <property type="entry name" value="FBA_II"/>
</dbReference>
<dbReference type="InterPro" id="IPR011289">
    <property type="entry name" value="Fruc_bis_ald_class-2"/>
</dbReference>
<dbReference type="InterPro" id="IPR006411">
    <property type="entry name" value="Fruct_bisP_bact"/>
</dbReference>
<dbReference type="NCBIfam" id="TIGR00167">
    <property type="entry name" value="cbbA"/>
    <property type="match status" value="1"/>
</dbReference>
<dbReference type="NCBIfam" id="TIGR01859">
    <property type="entry name" value="fruc_bis_ald"/>
    <property type="match status" value="1"/>
</dbReference>
<dbReference type="PANTHER" id="PTHR30559:SF0">
    <property type="entry name" value="FRUCTOSE-BISPHOSPHATE ALDOLASE"/>
    <property type="match status" value="1"/>
</dbReference>
<dbReference type="PANTHER" id="PTHR30559">
    <property type="entry name" value="FRUCTOSE-BISPHOSPHATE ALDOLASE CLASS 2"/>
    <property type="match status" value="1"/>
</dbReference>
<dbReference type="Pfam" id="PF01116">
    <property type="entry name" value="F_bP_aldolase"/>
    <property type="match status" value="1"/>
</dbReference>
<dbReference type="PIRSF" id="PIRSF001359">
    <property type="entry name" value="F_bP_aldolase_II"/>
    <property type="match status" value="1"/>
</dbReference>
<dbReference type="SUPFAM" id="SSF51569">
    <property type="entry name" value="Aldolase"/>
    <property type="match status" value="1"/>
</dbReference>
<dbReference type="PROSITE" id="PS00806">
    <property type="entry name" value="ALDOLASE_CLASS_II_2"/>
    <property type="match status" value="1"/>
</dbReference>
<gene>
    <name type="primary">fba</name>
    <name type="synonym">tsr</name>
    <name type="ordered locus">MPN_025</name>
    <name type="ORF">MP129</name>
</gene>
<keyword id="KW-0324">Glycolysis</keyword>
<keyword id="KW-0456">Lyase</keyword>
<keyword id="KW-0479">Metal-binding</keyword>
<keyword id="KW-1185">Reference proteome</keyword>
<keyword id="KW-0862">Zinc</keyword>
<protein>
    <recommendedName>
        <fullName>Fructose-bisphosphate aldolase</fullName>
        <shortName>FBP aldolase</shortName>
        <shortName>FBPA</shortName>
        <ecNumber>4.1.2.13</ecNumber>
    </recommendedName>
    <alternativeName>
        <fullName>Fructose-1,6-bisphosphate aldolase</fullName>
    </alternativeName>
</protein>
<comment type="function">
    <text evidence="1">Catalyzes the aldol condensation of dihydroxyacetone phosphate (DHAP or glycerone-phosphate) with glyceraldehyde 3-phosphate (G3P) to form fructose 1,6-bisphosphate (FBP) in gluconeogenesis and the reverse reaction in glycolysis.</text>
</comment>
<comment type="catalytic activity">
    <reaction>
        <text>beta-D-fructose 1,6-bisphosphate = D-glyceraldehyde 3-phosphate + dihydroxyacetone phosphate</text>
        <dbReference type="Rhea" id="RHEA:14729"/>
        <dbReference type="ChEBI" id="CHEBI:32966"/>
        <dbReference type="ChEBI" id="CHEBI:57642"/>
        <dbReference type="ChEBI" id="CHEBI:59776"/>
        <dbReference type="EC" id="4.1.2.13"/>
    </reaction>
</comment>
<comment type="cofactor">
    <cofactor evidence="1">
        <name>Zn(2+)</name>
        <dbReference type="ChEBI" id="CHEBI:29105"/>
    </cofactor>
    <text evidence="1">Binds 2 Zn(2+) ions per subunit. One is catalytic and the other provides a structural contribution.</text>
</comment>
<comment type="pathway">
    <text>Carbohydrate degradation; glycolysis; D-glyceraldehyde 3-phosphate and glycerone phosphate from D-glucose: step 4/4.</text>
</comment>
<comment type="subunit">
    <text evidence="1">Homodimer.</text>
</comment>
<comment type="similarity">
    <text evidence="2">Belongs to the class II fructose-bisphosphate aldolase family.</text>
</comment>